<name>NANP_HUMAN</name>
<gene>
    <name evidence="11" type="primary">NANP</name>
    <name type="synonym">C20orf147</name>
    <name type="synonym">HDHD4</name>
</gene>
<protein>
    <recommendedName>
        <fullName>N-acylneuraminate-9-phosphatase</fullName>
        <ecNumber evidence="2 3">3.1.3.29</ecNumber>
    </recommendedName>
    <alternativeName>
        <fullName evidence="6">Haloacid dehalogenase-like hydrolase domain-containing protein 4</fullName>
        <shortName evidence="6">HDHD4</shortName>
    </alternativeName>
    <alternativeName>
        <fullName evidence="5 6">N-acetylneuraminate-9-phosphate phosphatase</fullName>
    </alternativeName>
    <alternativeName>
        <fullName>Neu5Ac-9-Pase</fullName>
    </alternativeName>
</protein>
<keyword id="KW-0002">3D-structure</keyword>
<keyword id="KW-0119">Carbohydrate metabolism</keyword>
<keyword id="KW-0378">Hydrolase</keyword>
<keyword id="KW-0460">Magnesium</keyword>
<keyword id="KW-1267">Proteomics identification</keyword>
<keyword id="KW-1185">Reference proteome</keyword>
<proteinExistence type="evidence at protein level"/>
<feature type="chain" id="PRO_0000083938" description="N-acylneuraminate-9-phosphatase">
    <location>
        <begin position="1"/>
        <end position="248"/>
    </location>
</feature>
<feature type="binding site" evidence="3 13 14">
    <location>
        <position position="12"/>
    </location>
    <ligand>
        <name>Mg(2+)</name>
        <dbReference type="ChEBI" id="CHEBI:18420"/>
    </ligand>
</feature>
<feature type="binding site" evidence="3 13">
    <location>
        <position position="13"/>
    </location>
    <ligand>
        <name>phosphate</name>
        <dbReference type="ChEBI" id="CHEBI:43474"/>
    </ligand>
</feature>
<feature type="binding site" evidence="3 13 14">
    <location>
        <position position="14"/>
    </location>
    <ligand>
        <name>Mg(2+)</name>
        <dbReference type="ChEBI" id="CHEBI:18420"/>
    </ligand>
</feature>
<feature type="binding site" evidence="3 4 12 13">
    <location>
        <position position="14"/>
    </location>
    <ligand>
        <name>phosphate</name>
        <dbReference type="ChEBI" id="CHEBI:43474"/>
    </ligand>
</feature>
<feature type="binding site" evidence="3 4 12 13">
    <location>
        <position position="131"/>
    </location>
    <ligand>
        <name>phosphate</name>
        <dbReference type="ChEBI" id="CHEBI:43474"/>
    </ligand>
</feature>
<feature type="binding site" evidence="3 4 12 13">
    <location>
        <position position="132"/>
    </location>
    <ligand>
        <name>phosphate</name>
        <dbReference type="ChEBI" id="CHEBI:43474"/>
    </ligand>
</feature>
<feature type="binding site" evidence="3 4 12 13">
    <location>
        <position position="164"/>
    </location>
    <ligand>
        <name>phosphate</name>
        <dbReference type="ChEBI" id="CHEBI:43474"/>
    </ligand>
</feature>
<feature type="binding site" evidence="3 13 14">
    <location>
        <position position="189"/>
    </location>
    <ligand>
        <name>Mg(2+)</name>
        <dbReference type="ChEBI" id="CHEBI:18420"/>
    </ligand>
</feature>
<feature type="sequence conflict" description="In Ref. 1; BAB85055." evidence="7" ref="1">
    <original>IKLLQSKYHYKEEAEIICDKVQVK</original>
    <variation>TSPPMALLWAGSVRPAPSCTLTSP</variation>
    <location>
        <begin position="32"/>
        <end position="55"/>
    </location>
</feature>
<feature type="strand" evidence="16">
    <location>
        <begin position="8"/>
        <end position="11"/>
    </location>
</feature>
<feature type="turn" evidence="16">
    <location>
        <begin position="15"/>
        <end position="17"/>
    </location>
</feature>
<feature type="helix" evidence="16">
    <location>
        <begin position="20"/>
        <end position="38"/>
    </location>
</feature>
<feature type="helix" evidence="16">
    <location>
        <begin position="44"/>
        <end position="58"/>
    </location>
</feature>
<feature type="turn" evidence="15">
    <location>
        <begin position="63"/>
        <end position="65"/>
    </location>
</feature>
<feature type="helix" evidence="16">
    <location>
        <begin position="68"/>
        <end position="84"/>
    </location>
</feature>
<feature type="helix" evidence="16">
    <location>
        <begin position="90"/>
        <end position="107"/>
    </location>
</feature>
<feature type="helix" evidence="16">
    <location>
        <begin position="112"/>
        <end position="122"/>
    </location>
</feature>
<feature type="strand" evidence="16">
    <location>
        <begin position="125"/>
        <end position="131"/>
    </location>
</feature>
<feature type="helix" evidence="16">
    <location>
        <begin position="135"/>
        <end position="144"/>
    </location>
</feature>
<feature type="helix" evidence="16">
    <location>
        <begin position="148"/>
        <end position="150"/>
    </location>
</feature>
<feature type="strand" evidence="16">
    <location>
        <begin position="152"/>
        <end position="156"/>
    </location>
</feature>
<feature type="helix" evidence="16">
    <location>
        <begin position="157"/>
        <end position="159"/>
    </location>
</feature>
<feature type="strand" evidence="16">
    <location>
        <begin position="160"/>
        <end position="162"/>
    </location>
</feature>
<feature type="helix" evidence="16">
    <location>
        <begin position="167"/>
        <end position="176"/>
    </location>
</feature>
<feature type="helix" evidence="16">
    <location>
        <begin position="181"/>
        <end position="183"/>
    </location>
</feature>
<feature type="strand" evidence="16">
    <location>
        <begin position="184"/>
        <end position="189"/>
    </location>
</feature>
<feature type="turn" evidence="16">
    <location>
        <begin position="191"/>
        <end position="193"/>
    </location>
</feature>
<feature type="helix" evidence="16">
    <location>
        <begin position="194"/>
        <end position="200"/>
    </location>
</feature>
<feature type="strand" evidence="16">
    <location>
        <begin position="204"/>
        <end position="209"/>
    </location>
</feature>
<feature type="strand" evidence="16">
    <location>
        <begin position="224"/>
        <end position="228"/>
    </location>
</feature>
<feature type="helix" evidence="16">
    <location>
        <begin position="230"/>
        <end position="232"/>
    </location>
</feature>
<feature type="helix" evidence="16">
    <location>
        <begin position="233"/>
        <end position="237"/>
    </location>
</feature>
<feature type="turn" evidence="16">
    <location>
        <begin position="238"/>
        <end position="241"/>
    </location>
</feature>
<organism>
    <name type="scientific">Homo sapiens</name>
    <name type="common">Human</name>
    <dbReference type="NCBI Taxonomy" id="9606"/>
    <lineage>
        <taxon>Eukaryota</taxon>
        <taxon>Metazoa</taxon>
        <taxon>Chordata</taxon>
        <taxon>Craniata</taxon>
        <taxon>Vertebrata</taxon>
        <taxon>Euteleostomi</taxon>
        <taxon>Mammalia</taxon>
        <taxon>Eutheria</taxon>
        <taxon>Euarchontoglires</taxon>
        <taxon>Primates</taxon>
        <taxon>Haplorrhini</taxon>
        <taxon>Catarrhini</taxon>
        <taxon>Hominidae</taxon>
        <taxon>Homo</taxon>
    </lineage>
</organism>
<evidence type="ECO:0000269" key="1">
    <source>
    </source>
</evidence>
<evidence type="ECO:0000269" key="2">
    <source>
    </source>
</evidence>
<evidence type="ECO:0000269" key="3">
    <source>
    </source>
</evidence>
<evidence type="ECO:0000269" key="4">
    <source ref="7"/>
</evidence>
<evidence type="ECO:0000303" key="5">
    <source>
    </source>
</evidence>
<evidence type="ECO:0000303" key="6">
    <source>
    </source>
</evidence>
<evidence type="ECO:0000305" key="7"/>
<evidence type="ECO:0000305" key="8">
    <source>
    </source>
</evidence>
<evidence type="ECO:0000305" key="9">
    <source>
    </source>
</evidence>
<evidence type="ECO:0000305" key="10">
    <source>
    </source>
</evidence>
<evidence type="ECO:0000312" key="11">
    <source>
        <dbReference type="HGNC" id="HGNC:16140"/>
    </source>
</evidence>
<evidence type="ECO:0007744" key="12">
    <source>
        <dbReference type="PDB" id="2W4M"/>
    </source>
</evidence>
<evidence type="ECO:0007744" key="13">
    <source>
        <dbReference type="PDB" id="4KNV"/>
    </source>
</evidence>
<evidence type="ECO:0007744" key="14">
    <source>
        <dbReference type="PDB" id="4KNW"/>
    </source>
</evidence>
<evidence type="ECO:0007829" key="15">
    <source>
        <dbReference type="PDB" id="2W4M"/>
    </source>
</evidence>
<evidence type="ECO:0007829" key="16">
    <source>
        <dbReference type="PDB" id="4KNV"/>
    </source>
</evidence>
<dbReference type="EC" id="3.1.3.29" evidence="2 3"/>
<dbReference type="EMBL" id="AK055472">
    <property type="protein sequence ID" value="BAG51524.1"/>
    <property type="molecule type" value="mRNA"/>
</dbReference>
<dbReference type="EMBL" id="AK074335">
    <property type="protein sequence ID" value="BAB85055.1"/>
    <property type="status" value="ALT_SEQ"/>
    <property type="molecule type" value="mRNA"/>
</dbReference>
<dbReference type="EMBL" id="AL031673">
    <property type="status" value="NOT_ANNOTATED_CDS"/>
    <property type="molecule type" value="Genomic_DNA"/>
</dbReference>
<dbReference type="EMBL" id="CH471133">
    <property type="protein sequence ID" value="EAX10081.1"/>
    <property type="molecule type" value="Genomic_DNA"/>
</dbReference>
<dbReference type="EMBL" id="BC022552">
    <property type="protein sequence ID" value="AAH22552.1"/>
    <property type="molecule type" value="mRNA"/>
</dbReference>
<dbReference type="CCDS" id="CCDS13173.1"/>
<dbReference type="RefSeq" id="NP_689880.1">
    <property type="nucleotide sequence ID" value="NM_152667.3"/>
</dbReference>
<dbReference type="PDB" id="2W4M">
    <property type="method" value="X-ray"/>
    <property type="resolution" value="2.60 A"/>
    <property type="chains" value="A=1-248"/>
</dbReference>
<dbReference type="PDB" id="4KNV">
    <property type="method" value="X-ray"/>
    <property type="resolution" value="1.99 A"/>
    <property type="chains" value="A/B=7-242"/>
</dbReference>
<dbReference type="PDB" id="4KNW">
    <property type="method" value="X-ray"/>
    <property type="resolution" value="2.70 A"/>
    <property type="chains" value="A/B/C=2-248"/>
</dbReference>
<dbReference type="PDBsum" id="2W4M"/>
<dbReference type="PDBsum" id="4KNV"/>
<dbReference type="PDBsum" id="4KNW"/>
<dbReference type="BMRB" id="Q8TBE9"/>
<dbReference type="SMR" id="Q8TBE9"/>
<dbReference type="BioGRID" id="126729">
    <property type="interactions" value="22"/>
</dbReference>
<dbReference type="FunCoup" id="Q8TBE9">
    <property type="interactions" value="197"/>
</dbReference>
<dbReference type="IntAct" id="Q8TBE9">
    <property type="interactions" value="6"/>
</dbReference>
<dbReference type="STRING" id="9606.ENSP00000302441"/>
<dbReference type="BindingDB" id="Q8TBE9"/>
<dbReference type="ChEMBL" id="CHEMBL2401602"/>
<dbReference type="DEPOD" id="NANP"/>
<dbReference type="GlyGen" id="Q8TBE9">
    <property type="glycosylation" value="1 site, 1 O-linked glycan (1 site)"/>
</dbReference>
<dbReference type="iPTMnet" id="Q8TBE9"/>
<dbReference type="PhosphoSitePlus" id="Q8TBE9"/>
<dbReference type="BioMuta" id="NANP"/>
<dbReference type="DMDM" id="30315932"/>
<dbReference type="jPOST" id="Q8TBE9"/>
<dbReference type="MassIVE" id="Q8TBE9"/>
<dbReference type="PaxDb" id="9606-ENSP00000302441"/>
<dbReference type="PeptideAtlas" id="Q8TBE9"/>
<dbReference type="ProteomicsDB" id="74002"/>
<dbReference type="Pumba" id="Q8TBE9"/>
<dbReference type="Antibodypedia" id="10091">
    <property type="antibodies" value="372 antibodies from 27 providers"/>
</dbReference>
<dbReference type="DNASU" id="140838"/>
<dbReference type="Ensembl" id="ENST00000304788.4">
    <property type="protein sequence ID" value="ENSP00000302441.3"/>
    <property type="gene ID" value="ENSG00000170191.5"/>
</dbReference>
<dbReference type="GeneID" id="140838"/>
<dbReference type="KEGG" id="hsa:140838"/>
<dbReference type="MANE-Select" id="ENST00000304788.4">
    <property type="protein sequence ID" value="ENSP00000302441.3"/>
    <property type="RefSeq nucleotide sequence ID" value="NM_152667.3"/>
    <property type="RefSeq protein sequence ID" value="NP_689880.1"/>
</dbReference>
<dbReference type="UCSC" id="uc002wuy.5">
    <property type="organism name" value="human"/>
</dbReference>
<dbReference type="AGR" id="HGNC:16140"/>
<dbReference type="CTD" id="140838"/>
<dbReference type="DisGeNET" id="140838"/>
<dbReference type="GeneCards" id="NANP"/>
<dbReference type="HGNC" id="HGNC:16140">
    <property type="gene designation" value="NANP"/>
</dbReference>
<dbReference type="HPA" id="ENSG00000170191">
    <property type="expression patterns" value="Low tissue specificity"/>
</dbReference>
<dbReference type="MIM" id="610763">
    <property type="type" value="gene"/>
</dbReference>
<dbReference type="neXtProt" id="NX_Q8TBE9"/>
<dbReference type="OpenTargets" id="ENSG00000170191"/>
<dbReference type="PharmGKB" id="PA25689"/>
<dbReference type="VEuPathDB" id="HostDB:ENSG00000170191"/>
<dbReference type="eggNOG" id="KOG3085">
    <property type="taxonomic scope" value="Eukaryota"/>
</dbReference>
<dbReference type="GeneTree" id="ENSGT00390000003094"/>
<dbReference type="HOGENOM" id="CLU_045011_8_2_1"/>
<dbReference type="InParanoid" id="Q8TBE9"/>
<dbReference type="OMA" id="PQETHDT"/>
<dbReference type="OrthoDB" id="1694274at2759"/>
<dbReference type="PAN-GO" id="Q8TBE9">
    <property type="GO annotations" value="3 GO annotations based on evolutionary models"/>
</dbReference>
<dbReference type="PhylomeDB" id="Q8TBE9"/>
<dbReference type="TreeFam" id="TF324589"/>
<dbReference type="BioCyc" id="MetaCyc:HS10082-MONOMER"/>
<dbReference type="PathwayCommons" id="Q8TBE9"/>
<dbReference type="Reactome" id="R-HSA-4085001">
    <property type="pathway name" value="Sialic acid metabolism"/>
</dbReference>
<dbReference type="SABIO-RK" id="Q8TBE9"/>
<dbReference type="SignaLink" id="Q8TBE9"/>
<dbReference type="UniPathway" id="UPA00630"/>
<dbReference type="BioGRID-ORCS" id="140838">
    <property type="hits" value="35 hits in 1165 CRISPR screens"/>
</dbReference>
<dbReference type="EvolutionaryTrace" id="Q8TBE9"/>
<dbReference type="GenomeRNAi" id="140838"/>
<dbReference type="Pharos" id="Q8TBE9">
    <property type="development level" value="Tbio"/>
</dbReference>
<dbReference type="PRO" id="PR:Q8TBE9"/>
<dbReference type="Proteomes" id="UP000005640">
    <property type="component" value="Chromosome 20"/>
</dbReference>
<dbReference type="RNAct" id="Q8TBE9">
    <property type="molecule type" value="protein"/>
</dbReference>
<dbReference type="Bgee" id="ENSG00000170191">
    <property type="expression patterns" value="Expressed in kidney epithelium and 164 other cell types or tissues"/>
</dbReference>
<dbReference type="GO" id="GO:0005829">
    <property type="term" value="C:cytosol"/>
    <property type="evidence" value="ECO:0000304"/>
    <property type="project" value="Reactome"/>
</dbReference>
<dbReference type="GO" id="GO:0050124">
    <property type="term" value="F:N-acylneuraminate-9-phosphatase activity"/>
    <property type="evidence" value="ECO:0000314"/>
    <property type="project" value="UniProtKB"/>
</dbReference>
<dbReference type="GO" id="GO:0006055">
    <property type="term" value="P:CMP-N-acetylneuraminate biosynthetic process"/>
    <property type="evidence" value="ECO:0000315"/>
    <property type="project" value="FlyBase"/>
</dbReference>
<dbReference type="GO" id="GO:0070085">
    <property type="term" value="P:glycosylation"/>
    <property type="evidence" value="ECO:0000315"/>
    <property type="project" value="FlyBase"/>
</dbReference>
<dbReference type="GO" id="GO:0006045">
    <property type="term" value="P:N-acetylglucosamine biosynthetic process"/>
    <property type="evidence" value="ECO:0007669"/>
    <property type="project" value="UniProtKB-UniPathway"/>
</dbReference>
<dbReference type="GO" id="GO:0046380">
    <property type="term" value="P:N-acetylneuraminate biosynthetic process"/>
    <property type="evidence" value="ECO:0000314"/>
    <property type="project" value="UniProtKB"/>
</dbReference>
<dbReference type="CDD" id="cd04305">
    <property type="entry name" value="HAD_Neu5Ac-Pase_like"/>
    <property type="match status" value="1"/>
</dbReference>
<dbReference type="FunFam" id="1.20.120.710:FF:000001">
    <property type="entry name" value="N-acylneuraminate-9-phosphatase"/>
    <property type="match status" value="1"/>
</dbReference>
<dbReference type="FunFam" id="3.40.50.1000:FF:000116">
    <property type="entry name" value="N-acylneuraminate-9-phosphatase"/>
    <property type="match status" value="1"/>
</dbReference>
<dbReference type="Gene3D" id="3.40.50.1000">
    <property type="entry name" value="HAD superfamily/HAD-like"/>
    <property type="match status" value="1"/>
</dbReference>
<dbReference type="Gene3D" id="1.20.120.710">
    <property type="entry name" value="Haloacid dehalogenase hydrolase-like domain"/>
    <property type="match status" value="1"/>
</dbReference>
<dbReference type="InterPro" id="IPR051400">
    <property type="entry name" value="HAD-like_hydrolase"/>
</dbReference>
<dbReference type="InterPro" id="IPR036412">
    <property type="entry name" value="HAD-like_sf"/>
</dbReference>
<dbReference type="InterPro" id="IPR006439">
    <property type="entry name" value="HAD-SF_hydro_IA"/>
</dbReference>
<dbReference type="InterPro" id="IPR011950">
    <property type="entry name" value="HAD-SF_hydro_IA_CTE7"/>
</dbReference>
<dbReference type="InterPro" id="IPR023214">
    <property type="entry name" value="HAD_sf"/>
</dbReference>
<dbReference type="NCBIfam" id="TIGR02253">
    <property type="entry name" value="CTE7"/>
    <property type="match status" value="1"/>
</dbReference>
<dbReference type="NCBIfam" id="TIGR01549">
    <property type="entry name" value="HAD-SF-IA-v1"/>
    <property type="match status" value="1"/>
</dbReference>
<dbReference type="PANTHER" id="PTHR46470">
    <property type="entry name" value="N-ACYLNEURAMINATE-9-PHOSPHATASE"/>
    <property type="match status" value="1"/>
</dbReference>
<dbReference type="PANTHER" id="PTHR46470:SF3">
    <property type="entry name" value="N-ACYLNEURAMINATE-9-PHOSPHATASE"/>
    <property type="match status" value="1"/>
</dbReference>
<dbReference type="Pfam" id="PF00702">
    <property type="entry name" value="Hydrolase"/>
    <property type="match status" value="1"/>
</dbReference>
<dbReference type="PRINTS" id="PR00413">
    <property type="entry name" value="HADHALOGNASE"/>
</dbReference>
<dbReference type="SFLD" id="SFLDG01135">
    <property type="entry name" value="C1.5.6:_HAD__Beta-PGM__Phospha"/>
    <property type="match status" value="1"/>
</dbReference>
<dbReference type="SFLD" id="SFLDS00003">
    <property type="entry name" value="Haloacid_Dehalogenase"/>
    <property type="match status" value="1"/>
</dbReference>
<dbReference type="SUPFAM" id="SSF56784">
    <property type="entry name" value="HAD-like"/>
    <property type="match status" value="1"/>
</dbReference>
<comment type="function">
    <text evidence="1 2 3">Catalyzes the dephosphorylation of N-acylneuraminate 9-phosphate (Neu5Ac-9-P) to N-acetylneuraminic acid (Neu5Ac or sialic acid) (PubMed:14235556, PubMed:16237198, PubMed:23747226). Can also use N-glycoloylneuraminate 9-phosphate as substrate (PubMed:14235556).</text>
</comment>
<comment type="catalytic activity">
    <reaction evidence="1 2 3">
        <text>N-acetylneuraminate 9-phosphate + H2O = N-acetylneuraminate + phosphate</text>
        <dbReference type="Rhea" id="RHEA:80839"/>
        <dbReference type="ChEBI" id="CHEBI:15377"/>
        <dbReference type="ChEBI" id="CHEBI:35418"/>
        <dbReference type="ChEBI" id="CHEBI:43474"/>
        <dbReference type="ChEBI" id="CHEBI:231734"/>
        <dbReference type="EC" id="3.1.3.29"/>
    </reaction>
    <physiologicalReaction direction="left-to-right" evidence="8 9 10">
        <dbReference type="Rhea" id="RHEA:80840"/>
    </physiologicalReaction>
</comment>
<comment type="catalytic activity">
    <reaction evidence="1">
        <text>N-glycoloylneuraminate 9-phosphate + H2O = N-glycoloylneuraminate + phosphate</text>
        <dbReference type="Rhea" id="RHEA:83303"/>
        <dbReference type="ChEBI" id="CHEBI:15377"/>
        <dbReference type="ChEBI" id="CHEBI:29025"/>
        <dbReference type="ChEBI" id="CHEBI:43474"/>
        <dbReference type="ChEBI" id="CHEBI:232623"/>
    </reaction>
    <physiologicalReaction direction="left-to-right" evidence="8">
        <dbReference type="Rhea" id="RHEA:83304"/>
    </physiologicalReaction>
</comment>
<comment type="cofactor">
    <cofactor evidence="2 3">
        <name>Mg(2+)</name>
        <dbReference type="ChEBI" id="CHEBI:18420"/>
    </cofactor>
</comment>
<comment type="activity regulation">
    <text evidence="2 3">Inhibited by calcium (PubMed:16237198). Inhibited by vanadate, sodium orthovanadate and phosphonate (PubMed:16237198, PubMed:23747226).</text>
</comment>
<comment type="biophysicochemical properties">
    <kinetics>
        <KM evidence="3">0.047 mM for N-acetylneuraminate 9-P</KM>
        <KM evidence="2">0.09 mM for N-acetylneuraminate 9-P</KM>
        <KM evidence="2">19.2 mM for fructose 1,6-P2</KM>
        <KM evidence="2">2.7 mM for 6-P-gluconate</KM>
        <KM evidence="2">5.9 mM for N-acetylglucosamine 6-P</KM>
        <Vmax evidence="3">143.0 umol/min/mg enzyme with N-acetylneuraminate 9-P as substrate</Vmax>
        <Vmax evidence="2">112.0 umol/min/mg enzyme with N-acetylneuraminate 9-P as substrate</Vmax>
    </kinetics>
</comment>
<comment type="pathway">
    <text>Amino-sugar metabolism; N-acetylneuraminate biosynthesis.</text>
</comment>
<comment type="similarity">
    <text evidence="7">Belongs to the HAD-like hydrolase superfamily. NANP family.</text>
</comment>
<comment type="sequence caution" evidence="7">
    <conflict type="miscellaneous discrepancy">
        <sequence resource="EMBL-CDS" id="BAB85055"/>
    </conflict>
    <text>It seems to be derived from genomic DNA and not from cDNA.</text>
</comment>
<reference key="1">
    <citation type="journal article" date="2004" name="Nat. Genet.">
        <title>Complete sequencing and characterization of 21,243 full-length human cDNAs.</title>
        <authorList>
            <person name="Ota T."/>
            <person name="Suzuki Y."/>
            <person name="Nishikawa T."/>
            <person name="Otsuki T."/>
            <person name="Sugiyama T."/>
            <person name="Irie R."/>
            <person name="Wakamatsu A."/>
            <person name="Hayashi K."/>
            <person name="Sato H."/>
            <person name="Nagai K."/>
            <person name="Kimura K."/>
            <person name="Makita H."/>
            <person name="Sekine M."/>
            <person name="Obayashi M."/>
            <person name="Nishi T."/>
            <person name="Shibahara T."/>
            <person name="Tanaka T."/>
            <person name="Ishii S."/>
            <person name="Yamamoto J."/>
            <person name="Saito K."/>
            <person name="Kawai Y."/>
            <person name="Isono Y."/>
            <person name="Nakamura Y."/>
            <person name="Nagahari K."/>
            <person name="Murakami K."/>
            <person name="Yasuda T."/>
            <person name="Iwayanagi T."/>
            <person name="Wagatsuma M."/>
            <person name="Shiratori A."/>
            <person name="Sudo H."/>
            <person name="Hosoiri T."/>
            <person name="Kaku Y."/>
            <person name="Kodaira H."/>
            <person name="Kondo H."/>
            <person name="Sugawara M."/>
            <person name="Takahashi M."/>
            <person name="Kanda K."/>
            <person name="Yokoi T."/>
            <person name="Furuya T."/>
            <person name="Kikkawa E."/>
            <person name="Omura Y."/>
            <person name="Abe K."/>
            <person name="Kamihara K."/>
            <person name="Katsuta N."/>
            <person name="Sato K."/>
            <person name="Tanikawa M."/>
            <person name="Yamazaki M."/>
            <person name="Ninomiya K."/>
            <person name="Ishibashi T."/>
            <person name="Yamashita H."/>
            <person name="Murakawa K."/>
            <person name="Fujimori K."/>
            <person name="Tanai H."/>
            <person name="Kimata M."/>
            <person name="Watanabe M."/>
            <person name="Hiraoka S."/>
            <person name="Chiba Y."/>
            <person name="Ishida S."/>
            <person name="Ono Y."/>
            <person name="Takiguchi S."/>
            <person name="Watanabe S."/>
            <person name="Yosida M."/>
            <person name="Hotuta T."/>
            <person name="Kusano J."/>
            <person name="Kanehori K."/>
            <person name="Takahashi-Fujii A."/>
            <person name="Hara H."/>
            <person name="Tanase T.-O."/>
            <person name="Nomura Y."/>
            <person name="Togiya S."/>
            <person name="Komai F."/>
            <person name="Hara R."/>
            <person name="Takeuchi K."/>
            <person name="Arita M."/>
            <person name="Imose N."/>
            <person name="Musashino K."/>
            <person name="Yuuki H."/>
            <person name="Oshima A."/>
            <person name="Sasaki N."/>
            <person name="Aotsuka S."/>
            <person name="Yoshikawa Y."/>
            <person name="Matsunawa H."/>
            <person name="Ichihara T."/>
            <person name="Shiohata N."/>
            <person name="Sano S."/>
            <person name="Moriya S."/>
            <person name="Momiyama H."/>
            <person name="Satoh N."/>
            <person name="Takami S."/>
            <person name="Terashima Y."/>
            <person name="Suzuki O."/>
            <person name="Nakagawa S."/>
            <person name="Senoh A."/>
            <person name="Mizoguchi H."/>
            <person name="Goto Y."/>
            <person name="Shimizu F."/>
            <person name="Wakebe H."/>
            <person name="Hishigaki H."/>
            <person name="Watanabe T."/>
            <person name="Sugiyama A."/>
            <person name="Takemoto M."/>
            <person name="Kawakami B."/>
            <person name="Yamazaki M."/>
            <person name="Watanabe K."/>
            <person name="Kumagai A."/>
            <person name="Itakura S."/>
            <person name="Fukuzumi Y."/>
            <person name="Fujimori Y."/>
            <person name="Komiyama M."/>
            <person name="Tashiro H."/>
            <person name="Tanigami A."/>
            <person name="Fujiwara T."/>
            <person name="Ono T."/>
            <person name="Yamada K."/>
            <person name="Fujii Y."/>
            <person name="Ozaki K."/>
            <person name="Hirao M."/>
            <person name="Ohmori Y."/>
            <person name="Kawabata A."/>
            <person name="Hikiji T."/>
            <person name="Kobatake N."/>
            <person name="Inagaki H."/>
            <person name="Ikema Y."/>
            <person name="Okamoto S."/>
            <person name="Okitani R."/>
            <person name="Kawakami T."/>
            <person name="Noguchi S."/>
            <person name="Itoh T."/>
            <person name="Shigeta K."/>
            <person name="Senba T."/>
            <person name="Matsumura K."/>
            <person name="Nakajima Y."/>
            <person name="Mizuno T."/>
            <person name="Morinaga M."/>
            <person name="Sasaki M."/>
            <person name="Togashi T."/>
            <person name="Oyama M."/>
            <person name="Hata H."/>
            <person name="Watanabe M."/>
            <person name="Komatsu T."/>
            <person name="Mizushima-Sugano J."/>
            <person name="Satoh T."/>
            <person name="Shirai Y."/>
            <person name="Takahashi Y."/>
            <person name="Nakagawa K."/>
            <person name="Okumura K."/>
            <person name="Nagase T."/>
            <person name="Nomura N."/>
            <person name="Kikuchi H."/>
            <person name="Masuho Y."/>
            <person name="Yamashita R."/>
            <person name="Nakai K."/>
            <person name="Yada T."/>
            <person name="Nakamura Y."/>
            <person name="Ohara O."/>
            <person name="Isogai T."/>
            <person name="Sugano S."/>
        </authorList>
    </citation>
    <scope>NUCLEOTIDE SEQUENCE [LARGE SCALE MRNA]</scope>
    <source>
        <tissue>Brain</tissue>
    </source>
</reference>
<reference key="2">
    <citation type="journal article" date="2001" name="Nature">
        <title>The DNA sequence and comparative analysis of human chromosome 20.</title>
        <authorList>
            <person name="Deloukas P."/>
            <person name="Matthews L.H."/>
            <person name="Ashurst J.L."/>
            <person name="Burton J."/>
            <person name="Gilbert J.G.R."/>
            <person name="Jones M."/>
            <person name="Stavrides G."/>
            <person name="Almeida J.P."/>
            <person name="Babbage A.K."/>
            <person name="Bagguley C.L."/>
            <person name="Bailey J."/>
            <person name="Barlow K.F."/>
            <person name="Bates K.N."/>
            <person name="Beard L.M."/>
            <person name="Beare D.M."/>
            <person name="Beasley O.P."/>
            <person name="Bird C.P."/>
            <person name="Blakey S.E."/>
            <person name="Bridgeman A.M."/>
            <person name="Brown A.J."/>
            <person name="Buck D."/>
            <person name="Burrill W.D."/>
            <person name="Butler A.P."/>
            <person name="Carder C."/>
            <person name="Carter N.P."/>
            <person name="Chapman J.C."/>
            <person name="Clamp M."/>
            <person name="Clark G."/>
            <person name="Clark L.N."/>
            <person name="Clark S.Y."/>
            <person name="Clee C.M."/>
            <person name="Clegg S."/>
            <person name="Cobley V.E."/>
            <person name="Collier R.E."/>
            <person name="Connor R.E."/>
            <person name="Corby N.R."/>
            <person name="Coulson A."/>
            <person name="Coville G.J."/>
            <person name="Deadman R."/>
            <person name="Dhami P.D."/>
            <person name="Dunn M."/>
            <person name="Ellington A.G."/>
            <person name="Frankland J.A."/>
            <person name="Fraser A."/>
            <person name="French L."/>
            <person name="Garner P."/>
            <person name="Grafham D.V."/>
            <person name="Griffiths C."/>
            <person name="Griffiths M.N.D."/>
            <person name="Gwilliam R."/>
            <person name="Hall R.E."/>
            <person name="Hammond S."/>
            <person name="Harley J.L."/>
            <person name="Heath P.D."/>
            <person name="Ho S."/>
            <person name="Holden J.L."/>
            <person name="Howden P.J."/>
            <person name="Huckle E."/>
            <person name="Hunt A.R."/>
            <person name="Hunt S.E."/>
            <person name="Jekosch K."/>
            <person name="Johnson C.M."/>
            <person name="Johnson D."/>
            <person name="Kay M.P."/>
            <person name="Kimberley A.M."/>
            <person name="King A."/>
            <person name="Knights A."/>
            <person name="Laird G.K."/>
            <person name="Lawlor S."/>
            <person name="Lehvaeslaiho M.H."/>
            <person name="Leversha M.A."/>
            <person name="Lloyd C."/>
            <person name="Lloyd D.M."/>
            <person name="Lovell J.D."/>
            <person name="Marsh V.L."/>
            <person name="Martin S.L."/>
            <person name="McConnachie L.J."/>
            <person name="McLay K."/>
            <person name="McMurray A.A."/>
            <person name="Milne S.A."/>
            <person name="Mistry D."/>
            <person name="Moore M.J.F."/>
            <person name="Mullikin J.C."/>
            <person name="Nickerson T."/>
            <person name="Oliver K."/>
            <person name="Parker A."/>
            <person name="Patel R."/>
            <person name="Pearce T.A.V."/>
            <person name="Peck A.I."/>
            <person name="Phillimore B.J.C.T."/>
            <person name="Prathalingam S.R."/>
            <person name="Plumb R.W."/>
            <person name="Ramsay H."/>
            <person name="Rice C.M."/>
            <person name="Ross M.T."/>
            <person name="Scott C.E."/>
            <person name="Sehra H.K."/>
            <person name="Shownkeen R."/>
            <person name="Sims S."/>
            <person name="Skuce C.D."/>
            <person name="Smith M.L."/>
            <person name="Soderlund C."/>
            <person name="Steward C.A."/>
            <person name="Sulston J.E."/>
            <person name="Swann R.M."/>
            <person name="Sycamore N."/>
            <person name="Taylor R."/>
            <person name="Tee L."/>
            <person name="Thomas D.W."/>
            <person name="Thorpe A."/>
            <person name="Tracey A."/>
            <person name="Tromans A.C."/>
            <person name="Vaudin M."/>
            <person name="Wall M."/>
            <person name="Wallis J.M."/>
            <person name="Whitehead S.L."/>
            <person name="Whittaker P."/>
            <person name="Willey D.L."/>
            <person name="Williams L."/>
            <person name="Williams S.A."/>
            <person name="Wilming L."/>
            <person name="Wray P.W."/>
            <person name="Hubbard T."/>
            <person name="Durbin R.M."/>
            <person name="Bentley D.R."/>
            <person name="Beck S."/>
            <person name="Rogers J."/>
        </authorList>
    </citation>
    <scope>NUCLEOTIDE SEQUENCE [LARGE SCALE GENOMIC DNA]</scope>
</reference>
<reference key="3">
    <citation type="submission" date="2005-09" db="EMBL/GenBank/DDBJ databases">
        <authorList>
            <person name="Mural R.J."/>
            <person name="Istrail S."/>
            <person name="Sutton G.G."/>
            <person name="Florea L."/>
            <person name="Halpern A.L."/>
            <person name="Mobarry C.M."/>
            <person name="Lippert R."/>
            <person name="Walenz B."/>
            <person name="Shatkay H."/>
            <person name="Dew I."/>
            <person name="Miller J.R."/>
            <person name="Flanigan M.J."/>
            <person name="Edwards N.J."/>
            <person name="Bolanos R."/>
            <person name="Fasulo D."/>
            <person name="Halldorsson B.V."/>
            <person name="Hannenhalli S."/>
            <person name="Turner R."/>
            <person name="Yooseph S."/>
            <person name="Lu F."/>
            <person name="Nusskern D.R."/>
            <person name="Shue B.C."/>
            <person name="Zheng X.H."/>
            <person name="Zhong F."/>
            <person name="Delcher A.L."/>
            <person name="Huson D.H."/>
            <person name="Kravitz S.A."/>
            <person name="Mouchard L."/>
            <person name="Reinert K."/>
            <person name="Remington K.A."/>
            <person name="Clark A.G."/>
            <person name="Waterman M.S."/>
            <person name="Eichler E.E."/>
            <person name="Adams M.D."/>
            <person name="Hunkapiller M.W."/>
            <person name="Myers E.W."/>
            <person name="Venter J.C."/>
        </authorList>
    </citation>
    <scope>NUCLEOTIDE SEQUENCE [LARGE SCALE GENOMIC DNA]</scope>
</reference>
<reference key="4">
    <citation type="journal article" date="2004" name="Genome Res.">
        <title>The status, quality, and expansion of the NIH full-length cDNA project: the Mammalian Gene Collection (MGC).</title>
        <authorList>
            <consortium name="The MGC Project Team"/>
        </authorList>
    </citation>
    <scope>NUCLEOTIDE SEQUENCE [LARGE SCALE MRNA]</scope>
    <source>
        <tissue>Brain</tissue>
    </source>
</reference>
<reference key="5">
    <citation type="journal article" date="1964" name="J. Biol. Chem.">
        <title>ISOLATION OF SIALIC ACID 9-PHOSPHATASE FROM HUMAN ERYTHROCYTES.</title>
        <authorList>
            <person name="Jourdian G.W."/>
            <person name="Swanson A.L."/>
            <person name="Watson D."/>
            <person name="Roseman S."/>
        </authorList>
    </citation>
    <scope>FUNCTION</scope>
    <scope>CATALYTIC ACTIVITY</scope>
</reference>
<reference key="6">
    <citation type="journal article" date="2006" name="Glycobiology">
        <title>Identification of the sequence encoding N-acetylneuraminate-9-phosphate phosphatase.</title>
        <authorList>
            <person name="Maliekal P."/>
            <person name="Vertommen D."/>
            <person name="Delpierre G."/>
            <person name="Van Schaftingen E."/>
        </authorList>
    </citation>
    <scope>FUNCTION</scope>
    <scope>CATALYTIC ACTIVITY</scope>
    <scope>COFACTOR</scope>
    <scope>ACTIVITY REGULATION</scope>
    <scope>BIOPHYSICOCHEMICAL PROPERTIES</scope>
</reference>
<reference evidence="12" key="7">
    <citation type="submission" date="2008-12" db="PDB data bank">
        <title>The crystal structure of human N-acetylneuraminic acid phosphatase, NANP.</title>
        <authorList>
            <consortium name="Structural genomics consortium (SGC)"/>
        </authorList>
    </citation>
    <scope>X-RAY CRYSTALLOGRAPHY (2.6 ANGSTROMS) IN COMPLEX WITH PHOSPHATE IONS</scope>
</reference>
<reference evidence="13 14" key="8">
    <citation type="journal article" date="2013" name="Bioorg. Med. Chem. Lett.">
        <title>Design, synthesis, functional and structural characterization of an inhibitor of N-acetylneuraminate-9-phosphate phosphatase: observation of extensive dynamics in an enzyme/inhibitor complex.</title>
        <authorList>
            <person name="Kim S.H."/>
            <person name="Constantine K.L."/>
            <person name="Duke G.J."/>
            <person name="Goldfarb V."/>
            <person name="Hunt J.T."/>
            <person name="Johnson S."/>
            <person name="Kish K."/>
            <person name="Klei H.E."/>
            <person name="McDonnell P.A."/>
            <person name="Metzler W.J."/>
            <person name="Mueller L."/>
            <person name="Poss M.A."/>
            <person name="Fairchild C.R."/>
            <person name="Bhide R.S."/>
        </authorList>
    </citation>
    <scope>X-RAY CRYSTALLOGRAPHY (1.99 ANGSTROMS) OF 7-242 IN COMPLEX WITH MG(2+) AND PHOSPHATE ION</scope>
    <scope>FUNCTION</scope>
    <scope>CATALYTIC ACTIVITY</scope>
    <scope>BIOPHYSICOCHEMICAL PROPERTIES</scope>
    <scope>ACTIVITY REGULATION</scope>
    <scope>COFACTOR</scope>
</reference>
<sequence length="248" mass="27813">MGLSRVRAVFFDLDNTLIDTAGASRRGMLEVIKLLQSKYHYKEEAEIICDKVQVKLSKECFHPYNTCITDLRTSHWEEAIQETKGGAANRKLAEECYFLWKSTRLQHMTLAEDVKAMLTELRKEVRLLLLTNGDRQTQREKIEACACQSYFDAVVVGGEQREEKPAPSIFYYCCNLLGVQPGDCVMVGDTLETDIQGGLNAGLKATVWINKNGIVPLKSSPVPHYMVSSVLELPALLQSIDCKVSMST</sequence>
<accession>Q8TBE9</accession>
<accession>B3KP12</accession>
<accession>Q5JYN8</accession>
<accession>Q8TE97</accession>
<accession>Q9Y3N0</accession>